<comment type="function">
    <text evidence="1">Catalyzes the stereoinversion of LL-2,6-diaminopimelate (L,L-DAP) to meso-diaminopimelate (meso-DAP), a precursor of L-lysine.</text>
</comment>
<comment type="catalytic activity">
    <reaction evidence="1">
        <text>(2S,6S)-2,6-diaminopimelate = meso-2,6-diaminopimelate</text>
        <dbReference type="Rhea" id="RHEA:15393"/>
        <dbReference type="ChEBI" id="CHEBI:57609"/>
        <dbReference type="ChEBI" id="CHEBI:57791"/>
        <dbReference type="EC" id="5.1.1.7"/>
    </reaction>
</comment>
<comment type="pathway">
    <text evidence="1">Amino-acid biosynthesis; L-lysine biosynthesis via DAP pathway; DL-2,6-diaminopimelate from LL-2,6-diaminopimelate: step 1/1.</text>
</comment>
<comment type="subunit">
    <text evidence="1">Homodimer.</text>
</comment>
<comment type="subcellular location">
    <subcellularLocation>
        <location evidence="1">Cytoplasm</location>
    </subcellularLocation>
</comment>
<comment type="similarity">
    <text evidence="1">Belongs to the diaminopimelate epimerase family.</text>
</comment>
<name>DAPF_METM6</name>
<keyword id="KW-0028">Amino-acid biosynthesis</keyword>
<keyword id="KW-0963">Cytoplasm</keyword>
<keyword id="KW-0413">Isomerase</keyword>
<keyword id="KW-0457">Lysine biosynthesis</keyword>
<organism>
    <name type="scientific">Methanococcus maripaludis (strain C6 / ATCC BAA-1332)</name>
    <dbReference type="NCBI Taxonomy" id="444158"/>
    <lineage>
        <taxon>Archaea</taxon>
        <taxon>Methanobacteriati</taxon>
        <taxon>Methanobacteriota</taxon>
        <taxon>Methanomada group</taxon>
        <taxon>Methanococci</taxon>
        <taxon>Methanococcales</taxon>
        <taxon>Methanococcaceae</taxon>
        <taxon>Methanococcus</taxon>
    </lineage>
</organism>
<reference key="1">
    <citation type="submission" date="2007-10" db="EMBL/GenBank/DDBJ databases">
        <title>Complete sequence of Methanococcus maripaludis C6.</title>
        <authorList>
            <consortium name="US DOE Joint Genome Institute"/>
            <person name="Copeland A."/>
            <person name="Lucas S."/>
            <person name="Lapidus A."/>
            <person name="Barry K."/>
            <person name="Glavina del Rio T."/>
            <person name="Dalin E."/>
            <person name="Tice H."/>
            <person name="Pitluck S."/>
            <person name="Clum A."/>
            <person name="Schmutz J."/>
            <person name="Larimer F."/>
            <person name="Land M."/>
            <person name="Hauser L."/>
            <person name="Kyrpides N."/>
            <person name="Mikhailova N."/>
            <person name="Sieprawska-Lupa M."/>
            <person name="Whitman W.B."/>
            <person name="Richardson P."/>
        </authorList>
    </citation>
    <scope>NUCLEOTIDE SEQUENCE [LARGE SCALE GENOMIC DNA]</scope>
    <source>
        <strain>C6 / ATCC BAA-1332</strain>
    </source>
</reference>
<evidence type="ECO:0000255" key="1">
    <source>
        <dbReference type="HAMAP-Rule" id="MF_00197"/>
    </source>
</evidence>
<proteinExistence type="inferred from homology"/>
<feature type="chain" id="PRO_1000124422" description="Diaminopimelate epimerase">
    <location>
        <begin position="1"/>
        <end position="277"/>
    </location>
</feature>
<feature type="active site" description="Proton donor" evidence="1">
    <location>
        <position position="71"/>
    </location>
</feature>
<feature type="active site" description="Proton acceptor" evidence="1">
    <location>
        <position position="220"/>
    </location>
</feature>
<feature type="binding site" evidence="1">
    <location>
        <position position="11"/>
    </location>
    <ligand>
        <name>substrate</name>
    </ligand>
</feature>
<feature type="binding site" evidence="1">
    <location>
        <position position="62"/>
    </location>
    <ligand>
        <name>substrate</name>
    </ligand>
</feature>
<feature type="binding site" evidence="1">
    <location>
        <begin position="72"/>
        <end position="73"/>
    </location>
    <ligand>
        <name>substrate</name>
    </ligand>
</feature>
<feature type="binding site" evidence="1">
    <location>
        <position position="160"/>
    </location>
    <ligand>
        <name>substrate</name>
    </ligand>
</feature>
<feature type="binding site" evidence="1">
    <location>
        <position position="193"/>
    </location>
    <ligand>
        <name>substrate</name>
    </ligand>
</feature>
<feature type="binding site" evidence="1">
    <location>
        <begin position="211"/>
        <end position="212"/>
    </location>
    <ligand>
        <name>substrate</name>
    </ligand>
</feature>
<feature type="binding site" evidence="1">
    <location>
        <begin position="221"/>
        <end position="222"/>
    </location>
    <ligand>
        <name>substrate</name>
    </ligand>
</feature>
<feature type="site" description="Could be important to modulate the pK values of the two catalytic cysteine residues" evidence="1">
    <location>
        <position position="162"/>
    </location>
</feature>
<feature type="site" description="Could be important to modulate the pK values of the two catalytic cysteine residues" evidence="1">
    <location>
        <position position="211"/>
    </location>
</feature>
<dbReference type="EC" id="5.1.1.7" evidence="1"/>
<dbReference type="EMBL" id="CP000867">
    <property type="protein sequence ID" value="ABX02550.1"/>
    <property type="molecule type" value="Genomic_DNA"/>
</dbReference>
<dbReference type="SMR" id="A9AB27"/>
<dbReference type="STRING" id="444158.MmarC6_1738"/>
<dbReference type="KEGG" id="mmx:MmarC6_1738"/>
<dbReference type="eggNOG" id="arCOG02255">
    <property type="taxonomic scope" value="Archaea"/>
</dbReference>
<dbReference type="HOGENOM" id="CLU_053306_3_0_2"/>
<dbReference type="OrthoDB" id="358699at2157"/>
<dbReference type="PhylomeDB" id="A9AB27"/>
<dbReference type="UniPathway" id="UPA00034">
    <property type="reaction ID" value="UER00025"/>
</dbReference>
<dbReference type="GO" id="GO:0005829">
    <property type="term" value="C:cytosol"/>
    <property type="evidence" value="ECO:0007669"/>
    <property type="project" value="TreeGrafter"/>
</dbReference>
<dbReference type="GO" id="GO:0008837">
    <property type="term" value="F:diaminopimelate epimerase activity"/>
    <property type="evidence" value="ECO:0007669"/>
    <property type="project" value="UniProtKB-UniRule"/>
</dbReference>
<dbReference type="GO" id="GO:0009089">
    <property type="term" value="P:lysine biosynthetic process via diaminopimelate"/>
    <property type="evidence" value="ECO:0007669"/>
    <property type="project" value="UniProtKB-UniRule"/>
</dbReference>
<dbReference type="FunFam" id="3.10.310.10:FF:000001">
    <property type="entry name" value="Diaminopimelate epimerase"/>
    <property type="match status" value="1"/>
</dbReference>
<dbReference type="Gene3D" id="3.10.310.10">
    <property type="entry name" value="Diaminopimelate Epimerase, Chain A, domain 1"/>
    <property type="match status" value="2"/>
</dbReference>
<dbReference type="HAMAP" id="MF_00197">
    <property type="entry name" value="DAP_epimerase"/>
    <property type="match status" value="1"/>
</dbReference>
<dbReference type="InterPro" id="IPR018510">
    <property type="entry name" value="DAP_epimerase_AS"/>
</dbReference>
<dbReference type="InterPro" id="IPR001653">
    <property type="entry name" value="DAP_epimerase_DapF"/>
</dbReference>
<dbReference type="NCBIfam" id="TIGR00652">
    <property type="entry name" value="DapF"/>
    <property type="match status" value="1"/>
</dbReference>
<dbReference type="PANTHER" id="PTHR31689:SF0">
    <property type="entry name" value="DIAMINOPIMELATE EPIMERASE"/>
    <property type="match status" value="1"/>
</dbReference>
<dbReference type="PANTHER" id="PTHR31689">
    <property type="entry name" value="DIAMINOPIMELATE EPIMERASE, CHLOROPLASTIC"/>
    <property type="match status" value="1"/>
</dbReference>
<dbReference type="Pfam" id="PF01678">
    <property type="entry name" value="DAP_epimerase"/>
    <property type="match status" value="2"/>
</dbReference>
<dbReference type="SUPFAM" id="SSF54506">
    <property type="entry name" value="Diaminopimelate epimerase-like"/>
    <property type="match status" value="2"/>
</dbReference>
<dbReference type="PROSITE" id="PS01326">
    <property type="entry name" value="DAP_EPIMERASE"/>
    <property type="match status" value="1"/>
</dbReference>
<protein>
    <recommendedName>
        <fullName evidence="1">Diaminopimelate epimerase</fullName>
        <shortName evidence="1">DAP epimerase</shortName>
        <ecNumber evidence="1">5.1.1.7</ecNumber>
    </recommendedName>
    <alternativeName>
        <fullName evidence="1">PLP-independent amino acid racemase</fullName>
    </alternativeName>
</protein>
<sequence length="277" mass="30786">MKFTKMHGLGNDYIYVDAISQKIENPNEISRFVSDRHFGIGSDGLVLILPSDLADFKMRMFNSDGSEAEMCGNAIRCVGKFVYDKKMTDKSTITIETLAGIKVLEMTIENDKVVLVKVDMGEPILKAETIPVLSEKHPVIDEEITAKDYCYNFTCVSIGNPHAITYIENVEEFPLEKIGPLFEIHEKFPRKTNVEFVELIDDSTVKMRVWERGAGETLACGTGACAVLVASVLKGYVGRKATVKLLGGDLTIEWNESDNHIYMTGPATTVFEGEIDI</sequence>
<accession>A9AB27</accession>
<gene>
    <name evidence="1" type="primary">dapF</name>
    <name type="ordered locus">MmarC6_1738</name>
</gene>